<protein>
    <recommendedName>
        <fullName evidence="1">Thiol:disulfide interchange protein DsbD</fullName>
        <ecNumber evidence="1">1.8.1.8</ecNumber>
    </recommendedName>
    <alternativeName>
        <fullName evidence="1">Protein-disulfide reductase</fullName>
        <shortName evidence="1">Disulfide reductase</shortName>
    </alternativeName>
</protein>
<evidence type="ECO:0000255" key="1">
    <source>
        <dbReference type="HAMAP-Rule" id="MF_00399"/>
    </source>
</evidence>
<reference key="1">
    <citation type="journal article" date="2008" name="J. Bacteriol.">
        <title>The complete genome sequence of Actinobacillus pleuropneumoniae L20 (serotype 5b).</title>
        <authorList>
            <person name="Foote S.J."/>
            <person name="Bosse J.T."/>
            <person name="Bouevitch A.B."/>
            <person name="Langford P.R."/>
            <person name="Young N.M."/>
            <person name="Nash J.H.E."/>
        </authorList>
    </citation>
    <scope>NUCLEOTIDE SEQUENCE [LARGE SCALE GENOMIC DNA]</scope>
    <source>
        <strain>L20</strain>
    </source>
</reference>
<organism>
    <name type="scientific">Actinobacillus pleuropneumoniae serotype 5b (strain L20)</name>
    <dbReference type="NCBI Taxonomy" id="416269"/>
    <lineage>
        <taxon>Bacteria</taxon>
        <taxon>Pseudomonadati</taxon>
        <taxon>Pseudomonadota</taxon>
        <taxon>Gammaproteobacteria</taxon>
        <taxon>Pasteurellales</taxon>
        <taxon>Pasteurellaceae</taxon>
        <taxon>Actinobacillus</taxon>
    </lineage>
</organism>
<feature type="signal peptide" evidence="1">
    <location>
        <begin position="1"/>
        <end position="20"/>
    </location>
</feature>
<feature type="chain" id="PRO_0000304382" description="Thiol:disulfide interchange protein DsbD">
    <location>
        <begin position="21"/>
        <end position="583"/>
    </location>
</feature>
<feature type="transmembrane region" description="Helical" evidence="1">
    <location>
        <begin position="185"/>
        <end position="205"/>
    </location>
</feature>
<feature type="transmembrane region" description="Helical" evidence="1">
    <location>
        <begin position="237"/>
        <end position="257"/>
    </location>
</feature>
<feature type="transmembrane region" description="Helical" evidence="1">
    <location>
        <begin position="261"/>
        <end position="281"/>
    </location>
</feature>
<feature type="transmembrane region" description="Helical" evidence="1">
    <location>
        <begin position="302"/>
        <end position="322"/>
    </location>
</feature>
<feature type="transmembrane region" description="Helical" evidence="1">
    <location>
        <begin position="344"/>
        <end position="364"/>
    </location>
</feature>
<feature type="transmembrane region" description="Helical" evidence="1">
    <location>
        <begin position="375"/>
        <end position="395"/>
    </location>
</feature>
<feature type="transmembrane region" description="Helical" evidence="1">
    <location>
        <begin position="405"/>
        <end position="425"/>
    </location>
</feature>
<feature type="transmembrane region" description="Helical" evidence="1">
    <location>
        <begin position="433"/>
        <end position="453"/>
    </location>
</feature>
<feature type="domain" description="Thioredoxin" evidence="1">
    <location>
        <begin position="440"/>
        <end position="583"/>
    </location>
</feature>
<feature type="disulfide bond" description="Redox-active" evidence="1">
    <location>
        <begin position="123"/>
        <end position="128"/>
    </location>
</feature>
<feature type="disulfide bond" description="Redox-active" evidence="1">
    <location>
        <begin position="200"/>
        <end position="322"/>
    </location>
</feature>
<feature type="disulfide bond" description="Redox-active" evidence="1">
    <location>
        <begin position="500"/>
        <end position="503"/>
    </location>
</feature>
<dbReference type="EC" id="1.8.1.8" evidence="1"/>
<dbReference type="EMBL" id="CP000569">
    <property type="protein sequence ID" value="ABN74443.1"/>
    <property type="molecule type" value="Genomic_DNA"/>
</dbReference>
<dbReference type="RefSeq" id="WP_005601957.1">
    <property type="nucleotide sequence ID" value="NC_009053.1"/>
</dbReference>
<dbReference type="SMR" id="A3N207"/>
<dbReference type="STRING" id="416269.APL_1359"/>
<dbReference type="EnsemblBacteria" id="ABN74443">
    <property type="protein sequence ID" value="ABN74443"/>
    <property type="gene ID" value="APL_1359"/>
</dbReference>
<dbReference type="KEGG" id="apl:APL_1359"/>
<dbReference type="eggNOG" id="COG4232">
    <property type="taxonomic scope" value="Bacteria"/>
</dbReference>
<dbReference type="HOGENOM" id="CLU_014657_3_0_6"/>
<dbReference type="Proteomes" id="UP000001432">
    <property type="component" value="Chromosome"/>
</dbReference>
<dbReference type="GO" id="GO:0005886">
    <property type="term" value="C:plasma membrane"/>
    <property type="evidence" value="ECO:0007669"/>
    <property type="project" value="UniProtKB-SubCell"/>
</dbReference>
<dbReference type="GO" id="GO:0009055">
    <property type="term" value="F:electron transfer activity"/>
    <property type="evidence" value="ECO:0007669"/>
    <property type="project" value="UniProtKB-UniRule"/>
</dbReference>
<dbReference type="GO" id="GO:0047134">
    <property type="term" value="F:protein-disulfide reductase [NAD(P)H] activity"/>
    <property type="evidence" value="ECO:0007669"/>
    <property type="project" value="UniProtKB-UniRule"/>
</dbReference>
<dbReference type="GO" id="GO:0045454">
    <property type="term" value="P:cell redox homeostasis"/>
    <property type="evidence" value="ECO:0007669"/>
    <property type="project" value="TreeGrafter"/>
</dbReference>
<dbReference type="GO" id="GO:0017004">
    <property type="term" value="P:cytochrome complex assembly"/>
    <property type="evidence" value="ECO:0007669"/>
    <property type="project" value="UniProtKB-UniRule"/>
</dbReference>
<dbReference type="CDD" id="cd02953">
    <property type="entry name" value="DsbDgamma"/>
    <property type="match status" value="1"/>
</dbReference>
<dbReference type="FunFam" id="3.40.30.10:FF:000116">
    <property type="entry name" value="Thiol:disulfide interchange protein DsbD"/>
    <property type="match status" value="1"/>
</dbReference>
<dbReference type="Gene3D" id="3.40.30.10">
    <property type="entry name" value="Glutaredoxin"/>
    <property type="match status" value="1"/>
</dbReference>
<dbReference type="Gene3D" id="2.60.40.1250">
    <property type="entry name" value="Thiol:disulfide interchange protein DsbD, N-terminal domain"/>
    <property type="match status" value="1"/>
</dbReference>
<dbReference type="HAMAP" id="MF_00399">
    <property type="entry name" value="DbsD"/>
    <property type="match status" value="1"/>
</dbReference>
<dbReference type="InterPro" id="IPR003834">
    <property type="entry name" value="Cyt_c_assmbl_TM_dom"/>
</dbReference>
<dbReference type="InterPro" id="IPR035671">
    <property type="entry name" value="DsbD_gamma"/>
</dbReference>
<dbReference type="InterPro" id="IPR028250">
    <property type="entry name" value="DsbDN"/>
</dbReference>
<dbReference type="InterPro" id="IPR036929">
    <property type="entry name" value="DsbDN_sf"/>
</dbReference>
<dbReference type="InterPro" id="IPR022910">
    <property type="entry name" value="Thiol_diS_interchange_DbsD"/>
</dbReference>
<dbReference type="InterPro" id="IPR012336">
    <property type="entry name" value="Thioredoxin-like_fold"/>
</dbReference>
<dbReference type="InterPro" id="IPR036249">
    <property type="entry name" value="Thioredoxin-like_sf"/>
</dbReference>
<dbReference type="InterPro" id="IPR017937">
    <property type="entry name" value="Thioredoxin_CS"/>
</dbReference>
<dbReference type="InterPro" id="IPR013766">
    <property type="entry name" value="Thioredoxin_domain"/>
</dbReference>
<dbReference type="NCBIfam" id="NF001419">
    <property type="entry name" value="PRK00293.1"/>
    <property type="match status" value="1"/>
</dbReference>
<dbReference type="PANTHER" id="PTHR32234">
    <property type="entry name" value="THIOL:DISULFIDE INTERCHANGE PROTEIN DSBD"/>
    <property type="match status" value="1"/>
</dbReference>
<dbReference type="PANTHER" id="PTHR32234:SF0">
    <property type="entry name" value="THIOL:DISULFIDE INTERCHANGE PROTEIN DSBD"/>
    <property type="match status" value="1"/>
</dbReference>
<dbReference type="Pfam" id="PF11412">
    <property type="entry name" value="DsbD_N"/>
    <property type="match status" value="1"/>
</dbReference>
<dbReference type="Pfam" id="PF02683">
    <property type="entry name" value="DsbD_TM"/>
    <property type="match status" value="1"/>
</dbReference>
<dbReference type="Pfam" id="PF13098">
    <property type="entry name" value="Thioredoxin_2"/>
    <property type="match status" value="1"/>
</dbReference>
<dbReference type="SUPFAM" id="SSF74863">
    <property type="entry name" value="Thiol:disulfide interchange protein DsbD, N-terminal domain (DsbD-alpha)"/>
    <property type="match status" value="1"/>
</dbReference>
<dbReference type="SUPFAM" id="SSF52833">
    <property type="entry name" value="Thioredoxin-like"/>
    <property type="match status" value="1"/>
</dbReference>
<dbReference type="PROSITE" id="PS00194">
    <property type="entry name" value="THIOREDOXIN_1"/>
    <property type="match status" value="1"/>
</dbReference>
<dbReference type="PROSITE" id="PS51352">
    <property type="entry name" value="THIOREDOXIN_2"/>
    <property type="match status" value="1"/>
</dbReference>
<keyword id="KW-0997">Cell inner membrane</keyword>
<keyword id="KW-1003">Cell membrane</keyword>
<keyword id="KW-0201">Cytochrome c-type biogenesis</keyword>
<keyword id="KW-1015">Disulfide bond</keyword>
<keyword id="KW-0249">Electron transport</keyword>
<keyword id="KW-0472">Membrane</keyword>
<keyword id="KW-0520">NAD</keyword>
<keyword id="KW-0560">Oxidoreductase</keyword>
<keyword id="KW-0676">Redox-active center</keyword>
<keyword id="KW-1185">Reference proteome</keyword>
<keyword id="KW-0732">Signal</keyword>
<keyword id="KW-0812">Transmembrane</keyword>
<keyword id="KW-1133">Transmembrane helix</keyword>
<keyword id="KW-0813">Transport</keyword>
<proteinExistence type="inferred from homology"/>
<gene>
    <name evidence="1" type="primary">dsbD</name>
    <name type="ordered locus">APL_1359</name>
</gene>
<name>DSBD_ACTP2</name>
<accession>A3N207</accession>
<sequence>MLKRFIFLLVGITLTLSAHAGLFGNDQPKYLSGAEAFAFSATPKSDKQIELNWQIADGYYLYKKEIQVTPQNAEIQPLAFPAAENYHDEFFGEVEIFRNQLTLPITFSAEQANASLSVHYQGCTKGFCYPPETVTVSLDGQQAVDSAQNVAKNRENSTASQPLANAPKAEQDQLAENLANNRLSIFWFFLLGIGLAFTPCVLPMLPLLSAIVIGNKQRPNTFKALLLSFAYVQGMALTYTLLGLVVAAIGLPFQVALQSPPVLISLAILFTILAASMFGLFEIRLPNSWQQKLNAMSQKQQGGAFGSVFVMGMIAGLVASPCTSAPLSGALLYVAQSGDLLTGGLALYLLALGMGIPLILITLFGNRILPKSGDWLLKVKTAFGFVMLALPVFLLSRILPSHYEPLMWSALAMVFVGWLISVIPTQGVIKQAVRIVLFLTFAVASYPWANLVWNQGNSSHSAQVSNHLAFERVQSLAELQEKLTASQGKKVMLDLYADWCVACKEFEKYTFTDQAVQQKLAEMVVLQVDMTNNSAQNDELMKHFNVLGLPTILFFDESGKELTQSRVTGFLEANQFLNWLNQL</sequence>
<comment type="function">
    <text evidence="1">Required to facilitate the formation of correct disulfide bonds in some periplasmic proteins and for the assembly of the periplasmic c-type cytochromes. Acts by transferring electrons from cytoplasmic thioredoxin to the periplasm. This transfer involves a cascade of disulfide bond formation and reduction steps.</text>
</comment>
<comment type="catalytic activity">
    <reaction evidence="1">
        <text>[protein]-dithiol + NAD(+) = [protein]-disulfide + NADH + H(+)</text>
        <dbReference type="Rhea" id="RHEA:18749"/>
        <dbReference type="Rhea" id="RHEA-COMP:10593"/>
        <dbReference type="Rhea" id="RHEA-COMP:10594"/>
        <dbReference type="ChEBI" id="CHEBI:15378"/>
        <dbReference type="ChEBI" id="CHEBI:29950"/>
        <dbReference type="ChEBI" id="CHEBI:50058"/>
        <dbReference type="ChEBI" id="CHEBI:57540"/>
        <dbReference type="ChEBI" id="CHEBI:57945"/>
        <dbReference type="EC" id="1.8.1.8"/>
    </reaction>
</comment>
<comment type="catalytic activity">
    <reaction evidence="1">
        <text>[protein]-dithiol + NADP(+) = [protein]-disulfide + NADPH + H(+)</text>
        <dbReference type="Rhea" id="RHEA:18753"/>
        <dbReference type="Rhea" id="RHEA-COMP:10593"/>
        <dbReference type="Rhea" id="RHEA-COMP:10594"/>
        <dbReference type="ChEBI" id="CHEBI:15378"/>
        <dbReference type="ChEBI" id="CHEBI:29950"/>
        <dbReference type="ChEBI" id="CHEBI:50058"/>
        <dbReference type="ChEBI" id="CHEBI:57783"/>
        <dbReference type="ChEBI" id="CHEBI:58349"/>
        <dbReference type="EC" id="1.8.1.8"/>
    </reaction>
</comment>
<comment type="subcellular location">
    <subcellularLocation>
        <location evidence="1">Cell inner membrane</location>
        <topology evidence="1">Multi-pass membrane protein</topology>
    </subcellularLocation>
</comment>
<comment type="similarity">
    <text evidence="1">Belongs to the thioredoxin family. DsbD subfamily.</text>
</comment>